<evidence type="ECO:0000255" key="1">
    <source>
        <dbReference type="HAMAP-Rule" id="MF_01524"/>
    </source>
</evidence>
<keyword id="KW-0436">Ligase</keyword>
<comment type="function">
    <text evidence="1">Catalyzes the transfer of CoA to carnitine, generating the initial carnitinyl-CoA needed for the CaiB reaction cycle. Also has activity toward crotonobetaine and gamma-butyrobetaine.</text>
</comment>
<comment type="catalytic activity">
    <reaction evidence="1">
        <text>4-(trimethylamino)butanoate + ATP + CoA = 4-(trimethylamino)butanoyl-CoA + AMP + diphosphate</text>
        <dbReference type="Rhea" id="RHEA:55960"/>
        <dbReference type="ChEBI" id="CHEBI:16244"/>
        <dbReference type="ChEBI" id="CHEBI:30616"/>
        <dbReference type="ChEBI" id="CHEBI:33019"/>
        <dbReference type="ChEBI" id="CHEBI:57287"/>
        <dbReference type="ChEBI" id="CHEBI:61513"/>
        <dbReference type="ChEBI" id="CHEBI:456215"/>
        <dbReference type="EC" id="6.2.1.48"/>
    </reaction>
</comment>
<comment type="catalytic activity">
    <reaction evidence="1">
        <text>crotonobetaine + ATP + CoA = crotonobetainyl-CoA + AMP + diphosphate</text>
        <dbReference type="Rhea" id="RHEA:30079"/>
        <dbReference type="ChEBI" id="CHEBI:17237"/>
        <dbReference type="ChEBI" id="CHEBI:30616"/>
        <dbReference type="ChEBI" id="CHEBI:33019"/>
        <dbReference type="ChEBI" id="CHEBI:57287"/>
        <dbReference type="ChEBI" id="CHEBI:60933"/>
        <dbReference type="ChEBI" id="CHEBI:456215"/>
        <dbReference type="EC" id="6.2.1.48"/>
    </reaction>
</comment>
<comment type="catalytic activity">
    <reaction evidence="1">
        <text>(R)-carnitine + ATP + CoA = (R)-carnitinyl-CoA + AMP + diphosphate</text>
        <dbReference type="Rhea" id="RHEA:28514"/>
        <dbReference type="ChEBI" id="CHEBI:16347"/>
        <dbReference type="ChEBI" id="CHEBI:30616"/>
        <dbReference type="ChEBI" id="CHEBI:33019"/>
        <dbReference type="ChEBI" id="CHEBI:57287"/>
        <dbReference type="ChEBI" id="CHEBI:60932"/>
        <dbReference type="ChEBI" id="CHEBI:456215"/>
        <dbReference type="EC" id="6.2.1.48"/>
    </reaction>
</comment>
<comment type="pathway">
    <text evidence="1">Amine and polyamine metabolism; carnitine metabolism.</text>
</comment>
<comment type="similarity">
    <text evidence="1">Belongs to the ATP-dependent AMP-binding enzyme family.</text>
</comment>
<protein>
    <recommendedName>
        <fullName evidence="1">Crotonobetaine/carnitine--CoA ligase</fullName>
        <ecNumber evidence="1">6.2.1.48</ecNumber>
    </recommendedName>
</protein>
<proteinExistence type="inferred from homology"/>
<name>CAIC_SALA4</name>
<gene>
    <name evidence="1" type="primary">caiC</name>
    <name type="ordered locus">SeAg_B0078</name>
</gene>
<accession>B5F750</accession>
<organism>
    <name type="scientific">Salmonella agona (strain SL483)</name>
    <dbReference type="NCBI Taxonomy" id="454166"/>
    <lineage>
        <taxon>Bacteria</taxon>
        <taxon>Pseudomonadati</taxon>
        <taxon>Pseudomonadota</taxon>
        <taxon>Gammaproteobacteria</taxon>
        <taxon>Enterobacterales</taxon>
        <taxon>Enterobacteriaceae</taxon>
        <taxon>Salmonella</taxon>
    </lineage>
</organism>
<reference key="1">
    <citation type="journal article" date="2011" name="J. Bacteriol.">
        <title>Comparative genomics of 28 Salmonella enterica isolates: evidence for CRISPR-mediated adaptive sublineage evolution.</title>
        <authorList>
            <person name="Fricke W.F."/>
            <person name="Mammel M.K."/>
            <person name="McDermott P.F."/>
            <person name="Tartera C."/>
            <person name="White D.G."/>
            <person name="Leclerc J.E."/>
            <person name="Ravel J."/>
            <person name="Cebula T.A."/>
        </authorList>
    </citation>
    <scope>NUCLEOTIDE SEQUENCE [LARGE SCALE GENOMIC DNA]</scope>
    <source>
        <strain>SL483</strain>
    </source>
</reference>
<dbReference type="EC" id="6.2.1.48" evidence="1"/>
<dbReference type="EMBL" id="CP001138">
    <property type="protein sequence ID" value="ACH48610.1"/>
    <property type="molecule type" value="Genomic_DNA"/>
</dbReference>
<dbReference type="RefSeq" id="WP_000355808.1">
    <property type="nucleotide sequence ID" value="NC_011149.1"/>
</dbReference>
<dbReference type="SMR" id="B5F750"/>
<dbReference type="KEGG" id="sea:SeAg_B0078"/>
<dbReference type="HOGENOM" id="CLU_000022_59_0_6"/>
<dbReference type="UniPathway" id="UPA00117"/>
<dbReference type="Proteomes" id="UP000008819">
    <property type="component" value="Chromosome"/>
</dbReference>
<dbReference type="GO" id="GO:0051108">
    <property type="term" value="F:carnitine-CoA ligase activity"/>
    <property type="evidence" value="ECO:0007669"/>
    <property type="project" value="InterPro"/>
</dbReference>
<dbReference type="GO" id="GO:0051109">
    <property type="term" value="F:crotonobetaine-CoA ligase activity"/>
    <property type="evidence" value="ECO:0007669"/>
    <property type="project" value="InterPro"/>
</dbReference>
<dbReference type="GO" id="GO:0031956">
    <property type="term" value="F:medium-chain fatty acid-CoA ligase activity"/>
    <property type="evidence" value="ECO:0007669"/>
    <property type="project" value="TreeGrafter"/>
</dbReference>
<dbReference type="GO" id="GO:0009437">
    <property type="term" value="P:carnitine metabolic process"/>
    <property type="evidence" value="ECO:0007669"/>
    <property type="project" value="UniProtKB-UniRule"/>
</dbReference>
<dbReference type="GO" id="GO:0006631">
    <property type="term" value="P:fatty acid metabolic process"/>
    <property type="evidence" value="ECO:0007669"/>
    <property type="project" value="TreeGrafter"/>
</dbReference>
<dbReference type="CDD" id="cd05934">
    <property type="entry name" value="FACL_DitJ_like"/>
    <property type="match status" value="1"/>
</dbReference>
<dbReference type="FunFam" id="3.30.300.30:FF:000011">
    <property type="entry name" value="Crotonobetaine/carnitine--CoA ligase"/>
    <property type="match status" value="1"/>
</dbReference>
<dbReference type="Gene3D" id="3.30.300.30">
    <property type="match status" value="1"/>
</dbReference>
<dbReference type="Gene3D" id="3.40.50.12780">
    <property type="entry name" value="N-terminal domain of ligase-like"/>
    <property type="match status" value="1"/>
</dbReference>
<dbReference type="HAMAP" id="MF_01524">
    <property type="entry name" value="CaiC"/>
    <property type="match status" value="1"/>
</dbReference>
<dbReference type="InterPro" id="IPR025110">
    <property type="entry name" value="AMP-bd_C"/>
</dbReference>
<dbReference type="InterPro" id="IPR045851">
    <property type="entry name" value="AMP-bd_C_sf"/>
</dbReference>
<dbReference type="InterPro" id="IPR020845">
    <property type="entry name" value="AMP-binding_CS"/>
</dbReference>
<dbReference type="InterPro" id="IPR000873">
    <property type="entry name" value="AMP-dep_synth/lig_dom"/>
</dbReference>
<dbReference type="InterPro" id="IPR042099">
    <property type="entry name" value="ANL_N_sf"/>
</dbReference>
<dbReference type="InterPro" id="IPR023456">
    <property type="entry name" value="CaiC"/>
</dbReference>
<dbReference type="NCBIfam" id="NF005947">
    <property type="entry name" value="PRK08008.1"/>
    <property type="match status" value="1"/>
</dbReference>
<dbReference type="PANTHER" id="PTHR43201">
    <property type="entry name" value="ACYL-COA SYNTHETASE"/>
    <property type="match status" value="1"/>
</dbReference>
<dbReference type="PANTHER" id="PTHR43201:SF5">
    <property type="entry name" value="MEDIUM-CHAIN ACYL-COA LIGASE ACSF2, MITOCHONDRIAL"/>
    <property type="match status" value="1"/>
</dbReference>
<dbReference type="Pfam" id="PF00501">
    <property type="entry name" value="AMP-binding"/>
    <property type="match status" value="1"/>
</dbReference>
<dbReference type="Pfam" id="PF13193">
    <property type="entry name" value="AMP-binding_C"/>
    <property type="match status" value="1"/>
</dbReference>
<dbReference type="SUPFAM" id="SSF56801">
    <property type="entry name" value="Acetyl-CoA synthetase-like"/>
    <property type="match status" value="1"/>
</dbReference>
<dbReference type="PROSITE" id="PS00455">
    <property type="entry name" value="AMP_BINDING"/>
    <property type="match status" value="1"/>
</dbReference>
<feature type="chain" id="PRO_1000200915" description="Crotonobetaine/carnitine--CoA ligase">
    <location>
        <begin position="1"/>
        <end position="517"/>
    </location>
</feature>
<sequence>MDIVGGQNLRQMWDDLAGVYGDKTALIFESCEGIVRQFSYASLNEEINRTANLFYSLGIRKGDRVALHLDNCPEFIFCWFGLAKIGAIMVPINARLLGEESAWILQNSQVSLLVTSAQFYPMYREIRQDNSTPLNHICLIGEQLPADDGVSHFTQLQSRQSTTLCYTPALSTDDTAEILFTSGTTSRPKGVVITHYNLRFAGYYSAWQIALRDDDVYMTVMPAFHIDCQCTAAMPAFSAGSTFVLLEKYSARAFWDQVRKYQATVTECIPMMIRTLMVQPAAPTDRQHHLREVMFYLNLSEQEKDDFTERFGVRLLTSYGMTETIVGIIGDRPGDKRRWPSIGRVGFSYEAEIRDDQNRPLPAGEIGEICIKGIPGKTIFKEYYMQPEATARALEPEGWLHTGDSGYQDEDGYFYFVDRRCNMIKRGGENVSCVELENIISAHPKIQDIVVVGIKDAIRDEAIKAFIVLNEGETLSEAEFFSFCENNMAKFKVPSFMEIRTDLPRNCSGKIIKKNLK</sequence>